<keyword id="KW-0067">ATP-binding</keyword>
<keyword id="KW-0342">GTP-binding</keyword>
<keyword id="KW-0547">Nucleotide-binding</keyword>
<keyword id="KW-0548">Nucleotidyltransferase</keyword>
<keyword id="KW-1185">Reference proteome</keyword>
<keyword id="KW-0808">Transferase</keyword>
<dbReference type="EC" id="2.7.7.4" evidence="2"/>
<dbReference type="EMBL" id="CP000038">
    <property type="protein sequence ID" value="AAZ89501.1"/>
    <property type="molecule type" value="Genomic_DNA"/>
</dbReference>
<dbReference type="RefSeq" id="WP_001090361.1">
    <property type="nucleotide sequence ID" value="NC_007384.1"/>
</dbReference>
<dbReference type="SMR" id="Q3YYB1"/>
<dbReference type="GeneID" id="93779255"/>
<dbReference type="KEGG" id="ssn:SSON_2899"/>
<dbReference type="HOGENOM" id="CLU_007265_5_2_6"/>
<dbReference type="UniPathway" id="UPA00140">
    <property type="reaction ID" value="UER00204"/>
</dbReference>
<dbReference type="Proteomes" id="UP000002529">
    <property type="component" value="Chromosome"/>
</dbReference>
<dbReference type="GO" id="GO:0005524">
    <property type="term" value="F:ATP binding"/>
    <property type="evidence" value="ECO:0007669"/>
    <property type="project" value="UniProtKB-KW"/>
</dbReference>
<dbReference type="GO" id="GO:0005525">
    <property type="term" value="F:GTP binding"/>
    <property type="evidence" value="ECO:0007669"/>
    <property type="project" value="UniProtKB-UniRule"/>
</dbReference>
<dbReference type="GO" id="GO:0003924">
    <property type="term" value="F:GTPase activity"/>
    <property type="evidence" value="ECO:0007669"/>
    <property type="project" value="InterPro"/>
</dbReference>
<dbReference type="GO" id="GO:0004781">
    <property type="term" value="F:sulfate adenylyltransferase (ATP) activity"/>
    <property type="evidence" value="ECO:0007669"/>
    <property type="project" value="UniProtKB-UniRule"/>
</dbReference>
<dbReference type="GO" id="GO:0070814">
    <property type="term" value="P:hydrogen sulfide biosynthetic process"/>
    <property type="evidence" value="ECO:0007669"/>
    <property type="project" value="UniProtKB-UniRule"/>
</dbReference>
<dbReference type="GO" id="GO:0000103">
    <property type="term" value="P:sulfate assimilation"/>
    <property type="evidence" value="ECO:0007669"/>
    <property type="project" value="UniProtKB-UniRule"/>
</dbReference>
<dbReference type="CDD" id="cd04166">
    <property type="entry name" value="CysN_ATPS"/>
    <property type="match status" value="1"/>
</dbReference>
<dbReference type="CDD" id="cd03695">
    <property type="entry name" value="CysN_NodQ_II"/>
    <property type="match status" value="1"/>
</dbReference>
<dbReference type="CDD" id="cd04095">
    <property type="entry name" value="CysN_NoDQ_III"/>
    <property type="match status" value="1"/>
</dbReference>
<dbReference type="FunFam" id="2.40.30.10:FF:000027">
    <property type="entry name" value="Sulfate adenylyltransferase subunit 1"/>
    <property type="match status" value="1"/>
</dbReference>
<dbReference type="FunFam" id="2.40.30.10:FF:000031">
    <property type="entry name" value="Sulfate adenylyltransferase subunit 1"/>
    <property type="match status" value="1"/>
</dbReference>
<dbReference type="FunFam" id="3.40.50.300:FF:000119">
    <property type="entry name" value="Sulfate adenylyltransferase subunit 1"/>
    <property type="match status" value="1"/>
</dbReference>
<dbReference type="Gene3D" id="3.40.50.300">
    <property type="entry name" value="P-loop containing nucleotide triphosphate hydrolases"/>
    <property type="match status" value="1"/>
</dbReference>
<dbReference type="Gene3D" id="2.40.30.10">
    <property type="entry name" value="Translation factors"/>
    <property type="match status" value="2"/>
</dbReference>
<dbReference type="HAMAP" id="MF_00062">
    <property type="entry name" value="Sulf_adenylyltr_sub1"/>
    <property type="match status" value="1"/>
</dbReference>
<dbReference type="InterPro" id="IPR041757">
    <property type="entry name" value="CysN_GTP-bd"/>
</dbReference>
<dbReference type="InterPro" id="IPR044138">
    <property type="entry name" value="CysN_II"/>
</dbReference>
<dbReference type="InterPro" id="IPR044139">
    <property type="entry name" value="CysN_NoDQ_III"/>
</dbReference>
<dbReference type="InterPro" id="IPR031157">
    <property type="entry name" value="G_TR_CS"/>
</dbReference>
<dbReference type="InterPro" id="IPR054696">
    <property type="entry name" value="GTP-eEF1A_C"/>
</dbReference>
<dbReference type="InterPro" id="IPR027417">
    <property type="entry name" value="P-loop_NTPase"/>
</dbReference>
<dbReference type="InterPro" id="IPR005225">
    <property type="entry name" value="Small_GTP-bd"/>
</dbReference>
<dbReference type="InterPro" id="IPR011779">
    <property type="entry name" value="SO4_adenylTrfase_lsu"/>
</dbReference>
<dbReference type="InterPro" id="IPR000795">
    <property type="entry name" value="T_Tr_GTP-bd_dom"/>
</dbReference>
<dbReference type="InterPro" id="IPR050100">
    <property type="entry name" value="TRAFAC_GTPase_members"/>
</dbReference>
<dbReference type="InterPro" id="IPR009000">
    <property type="entry name" value="Transl_B-barrel_sf"/>
</dbReference>
<dbReference type="InterPro" id="IPR009001">
    <property type="entry name" value="Transl_elong_EF1A/Init_IF2_C"/>
</dbReference>
<dbReference type="NCBIfam" id="TIGR02034">
    <property type="entry name" value="CysN"/>
    <property type="match status" value="1"/>
</dbReference>
<dbReference type="NCBIfam" id="NF003478">
    <property type="entry name" value="PRK05124.1"/>
    <property type="match status" value="1"/>
</dbReference>
<dbReference type="NCBIfam" id="TIGR00231">
    <property type="entry name" value="small_GTP"/>
    <property type="match status" value="1"/>
</dbReference>
<dbReference type="PANTHER" id="PTHR23115">
    <property type="entry name" value="TRANSLATION FACTOR"/>
    <property type="match status" value="1"/>
</dbReference>
<dbReference type="Pfam" id="PF22594">
    <property type="entry name" value="GTP-eEF1A_C"/>
    <property type="match status" value="1"/>
</dbReference>
<dbReference type="Pfam" id="PF00009">
    <property type="entry name" value="GTP_EFTU"/>
    <property type="match status" value="1"/>
</dbReference>
<dbReference type="PRINTS" id="PR00315">
    <property type="entry name" value="ELONGATNFCT"/>
</dbReference>
<dbReference type="SUPFAM" id="SSF50465">
    <property type="entry name" value="EF-Tu/eEF-1alpha/eIF2-gamma C-terminal domain"/>
    <property type="match status" value="1"/>
</dbReference>
<dbReference type="SUPFAM" id="SSF52540">
    <property type="entry name" value="P-loop containing nucleoside triphosphate hydrolases"/>
    <property type="match status" value="1"/>
</dbReference>
<dbReference type="SUPFAM" id="SSF50447">
    <property type="entry name" value="Translation proteins"/>
    <property type="match status" value="1"/>
</dbReference>
<dbReference type="PROSITE" id="PS00301">
    <property type="entry name" value="G_TR_1"/>
    <property type="match status" value="1"/>
</dbReference>
<dbReference type="PROSITE" id="PS51722">
    <property type="entry name" value="G_TR_2"/>
    <property type="match status" value="1"/>
</dbReference>
<evidence type="ECO:0000250" key="1"/>
<evidence type="ECO:0000255" key="2">
    <source>
        <dbReference type="HAMAP-Rule" id="MF_00062"/>
    </source>
</evidence>
<gene>
    <name evidence="2" type="primary">cysN</name>
    <name type="ordered locus">SSON_2899</name>
</gene>
<accession>Q3YYB1</accession>
<protein>
    <recommendedName>
        <fullName evidence="2">Sulfate adenylyltransferase subunit 1</fullName>
        <ecNumber evidence="2">2.7.7.4</ecNumber>
    </recommendedName>
    <alternativeName>
        <fullName evidence="2">ATP-sulfurylase large subunit</fullName>
    </alternativeName>
    <alternativeName>
        <fullName evidence="2">Sulfate adenylate transferase</fullName>
        <shortName evidence="2">SAT</shortName>
    </alternativeName>
</protein>
<organism>
    <name type="scientific">Shigella sonnei (strain Ss046)</name>
    <dbReference type="NCBI Taxonomy" id="300269"/>
    <lineage>
        <taxon>Bacteria</taxon>
        <taxon>Pseudomonadati</taxon>
        <taxon>Pseudomonadota</taxon>
        <taxon>Gammaproteobacteria</taxon>
        <taxon>Enterobacterales</taxon>
        <taxon>Enterobacteriaceae</taxon>
        <taxon>Shigella</taxon>
    </lineage>
</organism>
<reference key="1">
    <citation type="journal article" date="2005" name="Nucleic Acids Res.">
        <title>Genome dynamics and diversity of Shigella species, the etiologic agents of bacillary dysentery.</title>
        <authorList>
            <person name="Yang F."/>
            <person name="Yang J."/>
            <person name="Zhang X."/>
            <person name="Chen L."/>
            <person name="Jiang Y."/>
            <person name="Yan Y."/>
            <person name="Tang X."/>
            <person name="Wang J."/>
            <person name="Xiong Z."/>
            <person name="Dong J."/>
            <person name="Xue Y."/>
            <person name="Zhu Y."/>
            <person name="Xu X."/>
            <person name="Sun L."/>
            <person name="Chen S."/>
            <person name="Nie H."/>
            <person name="Peng J."/>
            <person name="Xu J."/>
            <person name="Wang Y."/>
            <person name="Yuan Z."/>
            <person name="Wen Y."/>
            <person name="Yao Z."/>
            <person name="Shen Y."/>
            <person name="Qiang B."/>
            <person name="Hou Y."/>
            <person name="Yu J."/>
            <person name="Jin Q."/>
        </authorList>
    </citation>
    <scope>NUCLEOTIDE SEQUENCE [LARGE SCALE GENOMIC DNA]</scope>
    <source>
        <strain>Ss046</strain>
    </source>
</reference>
<comment type="function">
    <text evidence="2">With CysD forms the ATP sulfurylase (ATPS) that catalyzes the adenylation of sulfate producing adenosine 5'-phosphosulfate (APS) and diphosphate, the first enzymatic step in sulfur assimilation pathway. APS synthesis involves the formation of a high-energy phosphoric-sulfuric acid anhydride bond driven by GTP hydrolysis by CysN coupled to ATP hydrolysis by CysD.</text>
</comment>
<comment type="catalytic activity">
    <reaction evidence="2">
        <text>sulfate + ATP + H(+) = adenosine 5'-phosphosulfate + diphosphate</text>
        <dbReference type="Rhea" id="RHEA:18133"/>
        <dbReference type="ChEBI" id="CHEBI:15378"/>
        <dbReference type="ChEBI" id="CHEBI:16189"/>
        <dbReference type="ChEBI" id="CHEBI:30616"/>
        <dbReference type="ChEBI" id="CHEBI:33019"/>
        <dbReference type="ChEBI" id="CHEBI:58243"/>
        <dbReference type="EC" id="2.7.7.4"/>
    </reaction>
</comment>
<comment type="pathway">
    <text evidence="2">Sulfur metabolism; hydrogen sulfide biosynthesis; sulfite from sulfate: step 1/3.</text>
</comment>
<comment type="subunit">
    <text evidence="2">Heterodimer composed of CysD, the smaller subunit, and CysN.</text>
</comment>
<comment type="similarity">
    <text evidence="2">Belongs to the TRAFAC class translation factor GTPase superfamily. Classic translation factor GTPase family. CysN/NodQ subfamily.</text>
</comment>
<feature type="chain" id="PRO_1000008912" description="Sulfate adenylyltransferase subunit 1">
    <location>
        <begin position="1"/>
        <end position="475"/>
    </location>
</feature>
<feature type="domain" description="tr-type G">
    <location>
        <begin position="25"/>
        <end position="239"/>
    </location>
</feature>
<feature type="region of interest" description="G1" evidence="1">
    <location>
        <begin position="34"/>
        <end position="41"/>
    </location>
</feature>
<feature type="region of interest" description="G2" evidence="1">
    <location>
        <begin position="92"/>
        <end position="96"/>
    </location>
</feature>
<feature type="region of interest" description="G3" evidence="1">
    <location>
        <begin position="113"/>
        <end position="116"/>
    </location>
</feature>
<feature type="region of interest" description="G4" evidence="1">
    <location>
        <begin position="168"/>
        <end position="171"/>
    </location>
</feature>
<feature type="region of interest" description="G5" evidence="1">
    <location>
        <begin position="206"/>
        <end position="208"/>
    </location>
</feature>
<feature type="binding site" evidence="2">
    <location>
        <begin position="34"/>
        <end position="41"/>
    </location>
    <ligand>
        <name>GTP</name>
        <dbReference type="ChEBI" id="CHEBI:37565"/>
    </ligand>
</feature>
<feature type="binding site" evidence="2">
    <location>
        <begin position="113"/>
        <end position="117"/>
    </location>
    <ligand>
        <name>GTP</name>
        <dbReference type="ChEBI" id="CHEBI:37565"/>
    </ligand>
</feature>
<feature type="binding site" evidence="2">
    <location>
        <begin position="168"/>
        <end position="171"/>
    </location>
    <ligand>
        <name>GTP</name>
        <dbReference type="ChEBI" id="CHEBI:37565"/>
    </ligand>
</feature>
<name>CYSN_SHISS</name>
<proteinExistence type="inferred from homology"/>
<sequence>MNTALAQQIANEGGVEAWMIAQQHKSLLRFLTCGSVDDGKSTLIGRLLHDTRQIYEDQLSSLHNDSKRHGTQGEKLDLALLVDGLQAEREQGITIDVAYRYFSTEKRKFIIADTPGHEQYTRNMATGASTCELAILLIDARKGVLDQTRRHSFISTLLGIKHLVVAINKMDLVDYSEETFTRIREDYLTFAGQLPGNLDIRFVPLSALEGDNVASQSESMPWYSGPTLLEVLETVEIQRVVDAQPMRFPVQYVNRPNLDFRGYAGTLASGRVEVGQRVKVLPSGVESNVARIVTFDGDREEAFAGEAITLVLTDEIDISRGDLLLAADEALPAVQSASVDVVWMAEQPLSPGQSYDIKIAGKKTRARVDGIRYQVDINNLTQREVENLPLNGIGLVDLTFDEPLVLDRYQQNPVTGGLIFIDRLSNVTVGAGMVHEPVSQATAAPSEFSAFELELNALVRRHFPHWGARDLLGDK</sequence>